<proteinExistence type="inferred from homology"/>
<gene>
    <name evidence="1" type="primary">rplW</name>
    <name type="ordered locus">UUR10_0228</name>
</gene>
<keyword id="KW-0687">Ribonucleoprotein</keyword>
<keyword id="KW-0689">Ribosomal protein</keyword>
<keyword id="KW-0694">RNA-binding</keyword>
<keyword id="KW-0699">rRNA-binding</keyword>
<evidence type="ECO:0000255" key="1">
    <source>
        <dbReference type="HAMAP-Rule" id="MF_01369"/>
    </source>
</evidence>
<evidence type="ECO:0000305" key="2"/>
<organism>
    <name type="scientific">Ureaplasma urealyticum serovar 10 (strain ATCC 33699 / Western)</name>
    <dbReference type="NCBI Taxonomy" id="565575"/>
    <lineage>
        <taxon>Bacteria</taxon>
        <taxon>Bacillati</taxon>
        <taxon>Mycoplasmatota</taxon>
        <taxon>Mycoplasmoidales</taxon>
        <taxon>Mycoplasmoidaceae</taxon>
        <taxon>Ureaplasma</taxon>
    </lineage>
</organism>
<comment type="function">
    <text evidence="1">One of the early assembly proteins it binds 23S rRNA. One of the proteins that surrounds the polypeptide exit tunnel on the outside of the ribosome. Forms the main docking site for trigger factor binding to the ribosome.</text>
</comment>
<comment type="subunit">
    <text evidence="1">Part of the 50S ribosomal subunit. Contacts protein L29, and trigger factor when it is bound to the ribosome.</text>
</comment>
<comment type="similarity">
    <text evidence="1">Belongs to the universal ribosomal protein uL23 family.</text>
</comment>
<reference key="1">
    <citation type="submission" date="2008-10" db="EMBL/GenBank/DDBJ databases">
        <title>Genome sequence of Ureaplasma urealyticum serovar 10 ATCC-33699.</title>
        <authorList>
            <person name="Shrivastava S."/>
            <person name="Methe B.A."/>
            <person name="Glass J."/>
            <person name="White K."/>
            <person name="Duffy L.B."/>
        </authorList>
    </citation>
    <scope>NUCLEOTIDE SEQUENCE [LARGE SCALE GENOMIC DNA]</scope>
    <source>
        <strain>ATCC 33699 / Western</strain>
    </source>
</reference>
<accession>B5ZB42</accession>
<sequence>MELTRVILHPYTTEKTYSIRNKSEHETLTFIVDKNANKYQIREAFIAIFGLKPLKIRTTNRGPAKIRTSTARPGYTKAKKIAYIVMPIGVKVAVSKEEVEAANAK</sequence>
<protein>
    <recommendedName>
        <fullName evidence="1">Large ribosomal subunit protein uL23</fullName>
    </recommendedName>
    <alternativeName>
        <fullName evidence="2">50S ribosomal protein L23</fullName>
    </alternativeName>
</protein>
<dbReference type="EMBL" id="CP001184">
    <property type="protein sequence ID" value="ACI59965.1"/>
    <property type="molecule type" value="Genomic_DNA"/>
</dbReference>
<dbReference type="RefSeq" id="WP_004025740.1">
    <property type="nucleotide sequence ID" value="NC_011374.1"/>
</dbReference>
<dbReference type="SMR" id="B5ZB42"/>
<dbReference type="STRING" id="565575.UUR10_0228"/>
<dbReference type="KEGG" id="uue:UUR10_0228"/>
<dbReference type="eggNOG" id="COG0089">
    <property type="taxonomic scope" value="Bacteria"/>
</dbReference>
<dbReference type="HOGENOM" id="CLU_037562_2_0_14"/>
<dbReference type="OrthoDB" id="9793353at2"/>
<dbReference type="Proteomes" id="UP000002018">
    <property type="component" value="Chromosome"/>
</dbReference>
<dbReference type="GO" id="GO:1990904">
    <property type="term" value="C:ribonucleoprotein complex"/>
    <property type="evidence" value="ECO:0007669"/>
    <property type="project" value="UniProtKB-KW"/>
</dbReference>
<dbReference type="GO" id="GO:0005840">
    <property type="term" value="C:ribosome"/>
    <property type="evidence" value="ECO:0007669"/>
    <property type="project" value="UniProtKB-KW"/>
</dbReference>
<dbReference type="GO" id="GO:0019843">
    <property type="term" value="F:rRNA binding"/>
    <property type="evidence" value="ECO:0007669"/>
    <property type="project" value="UniProtKB-UniRule"/>
</dbReference>
<dbReference type="GO" id="GO:0003735">
    <property type="term" value="F:structural constituent of ribosome"/>
    <property type="evidence" value="ECO:0007669"/>
    <property type="project" value="InterPro"/>
</dbReference>
<dbReference type="GO" id="GO:0006412">
    <property type="term" value="P:translation"/>
    <property type="evidence" value="ECO:0007669"/>
    <property type="project" value="UniProtKB-UniRule"/>
</dbReference>
<dbReference type="Gene3D" id="3.30.70.330">
    <property type="match status" value="1"/>
</dbReference>
<dbReference type="HAMAP" id="MF_01369_B">
    <property type="entry name" value="Ribosomal_uL23_B"/>
    <property type="match status" value="1"/>
</dbReference>
<dbReference type="InterPro" id="IPR012677">
    <property type="entry name" value="Nucleotide-bd_a/b_plait_sf"/>
</dbReference>
<dbReference type="InterPro" id="IPR013025">
    <property type="entry name" value="Ribosomal_uL23-like"/>
</dbReference>
<dbReference type="InterPro" id="IPR012678">
    <property type="entry name" value="Ribosomal_uL23/eL15/eS24_sf"/>
</dbReference>
<dbReference type="NCBIfam" id="NF004367">
    <property type="entry name" value="PRK05738.3-3"/>
    <property type="match status" value="1"/>
</dbReference>
<dbReference type="Pfam" id="PF00276">
    <property type="entry name" value="Ribosomal_L23"/>
    <property type="match status" value="1"/>
</dbReference>
<dbReference type="SUPFAM" id="SSF54189">
    <property type="entry name" value="Ribosomal proteins S24e, L23 and L15e"/>
    <property type="match status" value="1"/>
</dbReference>
<feature type="chain" id="PRO_1000144622" description="Large ribosomal subunit protein uL23">
    <location>
        <begin position="1"/>
        <end position="105"/>
    </location>
</feature>
<name>RL23_UREU1</name>